<gene>
    <name evidence="1" type="primary">mtnN</name>
    <name type="synonym">mtn</name>
    <name type="ordered locus">STY0229</name>
    <name type="ordered locus">t0208</name>
</gene>
<accession>P60216</accession>
<accession>Q8XFN5</accession>
<dbReference type="EC" id="3.2.2.9" evidence="1"/>
<dbReference type="EMBL" id="AL513382">
    <property type="protein sequence ID" value="CAD01361.1"/>
    <property type="molecule type" value="Genomic_DNA"/>
</dbReference>
<dbReference type="EMBL" id="AE014613">
    <property type="protein sequence ID" value="AAO67939.1"/>
    <property type="molecule type" value="Genomic_DNA"/>
</dbReference>
<dbReference type="RefSeq" id="NP_454815.1">
    <property type="nucleotide sequence ID" value="NC_003198.1"/>
</dbReference>
<dbReference type="RefSeq" id="WP_000689821.1">
    <property type="nucleotide sequence ID" value="NZ_WSUR01000009.1"/>
</dbReference>
<dbReference type="SMR" id="P60216"/>
<dbReference type="STRING" id="220341.gene:17584263"/>
<dbReference type="KEGG" id="stt:t0208"/>
<dbReference type="KEGG" id="sty:STY0229"/>
<dbReference type="PATRIC" id="fig|220341.7.peg.230"/>
<dbReference type="eggNOG" id="COG0775">
    <property type="taxonomic scope" value="Bacteria"/>
</dbReference>
<dbReference type="HOGENOM" id="CLU_031248_2_2_6"/>
<dbReference type="OMA" id="DQFVHSK"/>
<dbReference type="OrthoDB" id="9792278at2"/>
<dbReference type="UniPathway" id="UPA00904">
    <property type="reaction ID" value="UER00871"/>
</dbReference>
<dbReference type="Proteomes" id="UP000000541">
    <property type="component" value="Chromosome"/>
</dbReference>
<dbReference type="Proteomes" id="UP000002670">
    <property type="component" value="Chromosome"/>
</dbReference>
<dbReference type="GO" id="GO:0005829">
    <property type="term" value="C:cytosol"/>
    <property type="evidence" value="ECO:0007669"/>
    <property type="project" value="TreeGrafter"/>
</dbReference>
<dbReference type="GO" id="GO:0008782">
    <property type="term" value="F:adenosylhomocysteine nucleosidase activity"/>
    <property type="evidence" value="ECO:0007669"/>
    <property type="project" value="UniProtKB-UniRule"/>
</dbReference>
<dbReference type="GO" id="GO:0008930">
    <property type="term" value="F:methylthioadenosine nucleosidase activity"/>
    <property type="evidence" value="ECO:0007669"/>
    <property type="project" value="UniProtKB-UniRule"/>
</dbReference>
<dbReference type="GO" id="GO:0019509">
    <property type="term" value="P:L-methionine salvage from methylthioadenosine"/>
    <property type="evidence" value="ECO:0007669"/>
    <property type="project" value="UniProtKB-UniRule"/>
</dbReference>
<dbReference type="GO" id="GO:0019284">
    <property type="term" value="P:L-methionine salvage from S-adenosylmethionine"/>
    <property type="evidence" value="ECO:0007669"/>
    <property type="project" value="TreeGrafter"/>
</dbReference>
<dbReference type="GO" id="GO:0046124">
    <property type="term" value="P:purine deoxyribonucleoside catabolic process"/>
    <property type="evidence" value="ECO:0007669"/>
    <property type="project" value="UniProtKB-UniRule"/>
</dbReference>
<dbReference type="CDD" id="cd09008">
    <property type="entry name" value="MTAN"/>
    <property type="match status" value="1"/>
</dbReference>
<dbReference type="FunFam" id="3.40.50.1580:FF:000001">
    <property type="entry name" value="MTA/SAH nucleosidase family protein"/>
    <property type="match status" value="1"/>
</dbReference>
<dbReference type="Gene3D" id="3.40.50.1580">
    <property type="entry name" value="Nucleoside phosphorylase domain"/>
    <property type="match status" value="1"/>
</dbReference>
<dbReference type="HAMAP" id="MF_01684">
    <property type="entry name" value="Salvage_MtnN"/>
    <property type="match status" value="1"/>
</dbReference>
<dbReference type="InterPro" id="IPR010049">
    <property type="entry name" value="MTA_SAH_Nsdase"/>
</dbReference>
<dbReference type="InterPro" id="IPR000845">
    <property type="entry name" value="Nucleoside_phosphorylase_d"/>
</dbReference>
<dbReference type="InterPro" id="IPR035994">
    <property type="entry name" value="Nucleoside_phosphorylase_sf"/>
</dbReference>
<dbReference type="NCBIfam" id="TIGR01704">
    <property type="entry name" value="MTA_SAH-Nsdase"/>
    <property type="match status" value="1"/>
</dbReference>
<dbReference type="NCBIfam" id="NF004079">
    <property type="entry name" value="PRK05584.1"/>
    <property type="match status" value="1"/>
</dbReference>
<dbReference type="PANTHER" id="PTHR46832">
    <property type="entry name" value="5'-METHYLTHIOADENOSINE/S-ADENOSYLHOMOCYSTEINE NUCLEOSIDASE"/>
    <property type="match status" value="1"/>
</dbReference>
<dbReference type="PANTHER" id="PTHR46832:SF1">
    <property type="entry name" value="5'-METHYLTHIOADENOSINE_S-ADENOSYLHOMOCYSTEINE NUCLEOSIDASE"/>
    <property type="match status" value="1"/>
</dbReference>
<dbReference type="Pfam" id="PF01048">
    <property type="entry name" value="PNP_UDP_1"/>
    <property type="match status" value="1"/>
</dbReference>
<dbReference type="SUPFAM" id="SSF53167">
    <property type="entry name" value="Purine and uridine phosphorylases"/>
    <property type="match status" value="1"/>
</dbReference>
<proteinExistence type="inferred from homology"/>
<comment type="function">
    <text evidence="1">Catalyzes the irreversible cleavage of the glycosidic bond in both 5'-methylthioadenosine (MTA) and S-adenosylhomocysteine (SAH/AdoHcy) to adenine and the corresponding thioribose, 5'-methylthioribose and S-ribosylhomocysteine, respectively. Also cleaves 5'-deoxyadenosine, a toxic by-product of radical S-adenosylmethionine (SAM) enzymes, into 5-deoxyribose and adenine. Thus, is required for in vivo function of the radical SAM enzymes biotin synthase and lipoic acid synthase, that are inhibited by 5'-deoxyadenosine accumulation.</text>
</comment>
<comment type="catalytic activity">
    <reaction evidence="1">
        <text>S-adenosyl-L-homocysteine + H2O = S-(5-deoxy-D-ribos-5-yl)-L-homocysteine + adenine</text>
        <dbReference type="Rhea" id="RHEA:17805"/>
        <dbReference type="ChEBI" id="CHEBI:15377"/>
        <dbReference type="ChEBI" id="CHEBI:16708"/>
        <dbReference type="ChEBI" id="CHEBI:57856"/>
        <dbReference type="ChEBI" id="CHEBI:58195"/>
        <dbReference type="EC" id="3.2.2.9"/>
    </reaction>
</comment>
<comment type="catalytic activity">
    <reaction evidence="1">
        <text>S-methyl-5'-thioadenosine + H2O = 5-(methylsulfanyl)-D-ribose + adenine</text>
        <dbReference type="Rhea" id="RHEA:13617"/>
        <dbReference type="ChEBI" id="CHEBI:15377"/>
        <dbReference type="ChEBI" id="CHEBI:16708"/>
        <dbReference type="ChEBI" id="CHEBI:17509"/>
        <dbReference type="ChEBI" id="CHEBI:78440"/>
        <dbReference type="EC" id="3.2.2.9"/>
    </reaction>
</comment>
<comment type="catalytic activity">
    <reaction evidence="1">
        <text>5'-deoxyadenosine + H2O = 5-deoxy-D-ribose + adenine</text>
        <dbReference type="Rhea" id="RHEA:29859"/>
        <dbReference type="ChEBI" id="CHEBI:15377"/>
        <dbReference type="ChEBI" id="CHEBI:16708"/>
        <dbReference type="ChEBI" id="CHEBI:17319"/>
        <dbReference type="ChEBI" id="CHEBI:149540"/>
        <dbReference type="EC" id="3.2.2.9"/>
    </reaction>
    <physiologicalReaction direction="left-to-right" evidence="1">
        <dbReference type="Rhea" id="RHEA:29860"/>
    </physiologicalReaction>
</comment>
<comment type="pathway">
    <text evidence="1">Amino-acid biosynthesis; L-methionine biosynthesis via salvage pathway; S-methyl-5-thio-alpha-D-ribose 1-phosphate from S-methyl-5'-thioadenosine (hydrolase route): step 1/2.</text>
</comment>
<comment type="subunit">
    <text evidence="1">Homodimer.</text>
</comment>
<comment type="similarity">
    <text evidence="1">Belongs to the PNP/UDP phosphorylase family. MtnN subfamily.</text>
</comment>
<sequence length="232" mass="24446">MKIGIIGAMEEEVTLLRDKIDNRQTITLGGCEIYTGQLNGTEVALLKSGIGKVAAALGATLLLEHCKPDVIINTGSAGGLASTLKVGDIVVSDEARYHDADVTAFGYEYGQLPGCPAGFKADDKLIAAAESCIRELNLNAVRGLIVSGDAFINGSVGLAKIRHNFPDAVAVEMEATAIAHVCHNFNVPFVVVRAISDVADQQSHLSFDEFLAVAAKQSTLMVETLVQKLAHG</sequence>
<feature type="chain" id="PRO_0000164447" description="5'-methylthioadenosine/S-adenosylhomocysteine nucleosidase">
    <location>
        <begin position="1"/>
        <end position="232"/>
    </location>
</feature>
<feature type="active site" description="Proton acceptor" evidence="1">
    <location>
        <position position="12"/>
    </location>
</feature>
<feature type="active site" description="Proton donor" evidence="1">
    <location>
        <position position="197"/>
    </location>
</feature>
<feature type="binding site" evidence="1">
    <location>
        <position position="78"/>
    </location>
    <ligand>
        <name>substrate</name>
    </ligand>
</feature>
<feature type="binding site" evidence="1">
    <location>
        <position position="152"/>
    </location>
    <ligand>
        <name>substrate</name>
    </ligand>
</feature>
<feature type="binding site" evidence="1">
    <location>
        <begin position="173"/>
        <end position="174"/>
    </location>
    <ligand>
        <name>substrate</name>
    </ligand>
</feature>
<keyword id="KW-0028">Amino-acid biosynthesis</keyword>
<keyword id="KW-0378">Hydrolase</keyword>
<keyword id="KW-0486">Methionine biosynthesis</keyword>
<organism>
    <name type="scientific">Salmonella typhi</name>
    <dbReference type="NCBI Taxonomy" id="90370"/>
    <lineage>
        <taxon>Bacteria</taxon>
        <taxon>Pseudomonadati</taxon>
        <taxon>Pseudomonadota</taxon>
        <taxon>Gammaproteobacteria</taxon>
        <taxon>Enterobacterales</taxon>
        <taxon>Enterobacteriaceae</taxon>
        <taxon>Salmonella</taxon>
    </lineage>
</organism>
<evidence type="ECO:0000255" key="1">
    <source>
        <dbReference type="HAMAP-Rule" id="MF_01684"/>
    </source>
</evidence>
<name>MTNN_SALTI</name>
<protein>
    <recommendedName>
        <fullName evidence="1">5'-methylthioadenosine/S-adenosylhomocysteine nucleosidase</fullName>
        <shortName evidence="1">MTA/SAH nucleosidase</shortName>
        <shortName evidence="1">MTAN</shortName>
        <ecNumber evidence="1">3.2.2.9</ecNumber>
    </recommendedName>
    <alternativeName>
        <fullName evidence="1">5'-deoxyadenosine nucleosidase</fullName>
        <shortName evidence="1">DOA nucleosidase</shortName>
        <shortName evidence="1">dAdo nucleosidase</shortName>
    </alternativeName>
    <alternativeName>
        <fullName evidence="1">5'-methylthioadenosine nucleosidase</fullName>
        <shortName evidence="1">MTA nucleosidase</shortName>
    </alternativeName>
    <alternativeName>
        <fullName evidence="1">S-adenosylhomocysteine nucleosidase</fullName>
        <shortName evidence="1">AdoHcy nucleosidase</shortName>
        <shortName evidence="1">SAH nucleosidase</shortName>
        <shortName evidence="1">SRH nucleosidase</shortName>
    </alternativeName>
</protein>
<reference key="1">
    <citation type="journal article" date="2001" name="Nature">
        <title>Complete genome sequence of a multiple drug resistant Salmonella enterica serovar Typhi CT18.</title>
        <authorList>
            <person name="Parkhill J."/>
            <person name="Dougan G."/>
            <person name="James K.D."/>
            <person name="Thomson N.R."/>
            <person name="Pickard D."/>
            <person name="Wain J."/>
            <person name="Churcher C.M."/>
            <person name="Mungall K.L."/>
            <person name="Bentley S.D."/>
            <person name="Holden M.T.G."/>
            <person name="Sebaihia M."/>
            <person name="Baker S."/>
            <person name="Basham D."/>
            <person name="Brooks K."/>
            <person name="Chillingworth T."/>
            <person name="Connerton P."/>
            <person name="Cronin A."/>
            <person name="Davis P."/>
            <person name="Davies R.M."/>
            <person name="Dowd L."/>
            <person name="White N."/>
            <person name="Farrar J."/>
            <person name="Feltwell T."/>
            <person name="Hamlin N."/>
            <person name="Haque A."/>
            <person name="Hien T.T."/>
            <person name="Holroyd S."/>
            <person name="Jagels K."/>
            <person name="Krogh A."/>
            <person name="Larsen T.S."/>
            <person name="Leather S."/>
            <person name="Moule S."/>
            <person name="O'Gaora P."/>
            <person name="Parry C."/>
            <person name="Quail M.A."/>
            <person name="Rutherford K.M."/>
            <person name="Simmonds M."/>
            <person name="Skelton J."/>
            <person name="Stevens K."/>
            <person name="Whitehead S."/>
            <person name="Barrell B.G."/>
        </authorList>
    </citation>
    <scope>NUCLEOTIDE SEQUENCE [LARGE SCALE GENOMIC DNA]</scope>
    <source>
        <strain>CT18</strain>
    </source>
</reference>
<reference key="2">
    <citation type="journal article" date="2003" name="J. Bacteriol.">
        <title>Comparative genomics of Salmonella enterica serovar Typhi strains Ty2 and CT18.</title>
        <authorList>
            <person name="Deng W."/>
            <person name="Liou S.-R."/>
            <person name="Plunkett G. III"/>
            <person name="Mayhew G.F."/>
            <person name="Rose D.J."/>
            <person name="Burland V."/>
            <person name="Kodoyianni V."/>
            <person name="Schwartz D.C."/>
            <person name="Blattner F.R."/>
        </authorList>
    </citation>
    <scope>NUCLEOTIDE SEQUENCE [LARGE SCALE GENOMIC DNA]</scope>
    <source>
        <strain>ATCC 700931 / Ty2</strain>
    </source>
</reference>